<name>FTHS_BACFN</name>
<comment type="catalytic activity">
    <reaction evidence="1">
        <text>(6S)-5,6,7,8-tetrahydrofolate + formate + ATP = (6R)-10-formyltetrahydrofolate + ADP + phosphate</text>
        <dbReference type="Rhea" id="RHEA:20221"/>
        <dbReference type="ChEBI" id="CHEBI:15740"/>
        <dbReference type="ChEBI" id="CHEBI:30616"/>
        <dbReference type="ChEBI" id="CHEBI:43474"/>
        <dbReference type="ChEBI" id="CHEBI:57453"/>
        <dbReference type="ChEBI" id="CHEBI:195366"/>
        <dbReference type="ChEBI" id="CHEBI:456216"/>
        <dbReference type="EC" id="6.3.4.3"/>
    </reaction>
</comment>
<comment type="pathway">
    <text evidence="1">One-carbon metabolism; tetrahydrofolate interconversion.</text>
</comment>
<comment type="similarity">
    <text evidence="1">Belongs to the formate--tetrahydrofolate ligase family.</text>
</comment>
<organism>
    <name type="scientific">Bacteroides fragilis (strain ATCC 25285 / DSM 2151 / CCUG 4856 / JCM 11019 / LMG 10263 / NCTC 9343 / Onslow / VPI 2553 / EN-2)</name>
    <dbReference type="NCBI Taxonomy" id="272559"/>
    <lineage>
        <taxon>Bacteria</taxon>
        <taxon>Pseudomonadati</taxon>
        <taxon>Bacteroidota</taxon>
        <taxon>Bacteroidia</taxon>
        <taxon>Bacteroidales</taxon>
        <taxon>Bacteroidaceae</taxon>
        <taxon>Bacteroides</taxon>
    </lineage>
</organism>
<evidence type="ECO:0000255" key="1">
    <source>
        <dbReference type="HAMAP-Rule" id="MF_01543"/>
    </source>
</evidence>
<gene>
    <name evidence="1" type="primary">fhs</name>
    <name type="ordered locus">BF2256</name>
</gene>
<feature type="chain" id="PRO_0000199334" description="Formate--tetrahydrofolate ligase">
    <location>
        <begin position="1"/>
        <end position="555"/>
    </location>
</feature>
<feature type="binding site" evidence="1">
    <location>
        <begin position="64"/>
        <end position="71"/>
    </location>
    <ligand>
        <name>ATP</name>
        <dbReference type="ChEBI" id="CHEBI:30616"/>
    </ligand>
</feature>
<proteinExistence type="inferred from homology"/>
<sequence length="555" mass="60418">MKSDIEIARSVELKKIKQVAESIGIPRDEVENYGRYIAKIPEYLIDEEKVKKSNLILVTAITATKAGIGKTTVSIGLALGLNKIGKKAIVALREPSLGPCFGMKGGAAGGGYAQVLPMEKINLHFTGDFHAITSAHNMISALLDNYLYQNQSKGFGLKEILWRRVLDVNDRSLRNIVVGLGPKTNGITQESGFDITPASEIMAILCLSKDVDDLRRRIENILLGYTYDNKPFTVKDLGVAGAITVLLKDAIHPNLVQTTEGTAAFVHGGPFANIAHGCNSILATKMAMTFGDYVITEAGFGADLGAEKFYNIKCRKSGLQPRLTVIVATAQGLKMHGGVSLDRIKEPNLEGLREGLRNLDKHVRNLHSFGQTVIVAFNKFASDTDEEMELLREHCEQLGVGYAINNAFSEGGEGAVDLANLVVETIENKPSEPLQFTYNDEDSVQQKIEKVATNLYGASVVTYSTLTRNKIKLIEEMGIGHYPVCIAKTQYSFSADPKVYGAVDNFELHIKDIVINNGAEMIVAIAGEIMRMPGLPKEPQALHIDIVDGNIEGLS</sequence>
<reference key="1">
    <citation type="journal article" date="2005" name="Science">
        <title>Extensive DNA inversions in the B. fragilis genome control variable gene expression.</title>
        <authorList>
            <person name="Cerdeno-Tarraga A.-M."/>
            <person name="Patrick S."/>
            <person name="Crossman L.C."/>
            <person name="Blakely G."/>
            <person name="Abratt V."/>
            <person name="Lennard N."/>
            <person name="Poxton I."/>
            <person name="Duerden B."/>
            <person name="Harris B."/>
            <person name="Quail M.A."/>
            <person name="Barron A."/>
            <person name="Clark L."/>
            <person name="Corton C."/>
            <person name="Doggett J."/>
            <person name="Holden M.T.G."/>
            <person name="Larke N."/>
            <person name="Line A."/>
            <person name="Lord A."/>
            <person name="Norbertczak H."/>
            <person name="Ormond D."/>
            <person name="Price C."/>
            <person name="Rabbinowitsch E."/>
            <person name="Woodward J."/>
            <person name="Barrell B.G."/>
            <person name="Parkhill J."/>
        </authorList>
    </citation>
    <scope>NUCLEOTIDE SEQUENCE [LARGE SCALE GENOMIC DNA]</scope>
    <source>
        <strain>ATCC 25285 / DSM 2151 / CCUG 4856 / JCM 11019 / LMG 10263 / NCTC 9343 / Onslow / VPI 2553 / EN-2</strain>
    </source>
</reference>
<keyword id="KW-0067">ATP-binding</keyword>
<keyword id="KW-0436">Ligase</keyword>
<keyword id="KW-0547">Nucleotide-binding</keyword>
<keyword id="KW-0554">One-carbon metabolism</keyword>
<accession>Q5LD60</accession>
<protein>
    <recommendedName>
        <fullName evidence="1">Formate--tetrahydrofolate ligase</fullName>
        <ecNumber evidence="1">6.3.4.3</ecNumber>
    </recommendedName>
    <alternativeName>
        <fullName evidence="1">Formyltetrahydrofolate synthetase</fullName>
        <shortName evidence="1">FHS</shortName>
        <shortName evidence="1">FTHFS</shortName>
    </alternativeName>
</protein>
<dbReference type="EC" id="6.3.4.3" evidence="1"/>
<dbReference type="EMBL" id="CR626927">
    <property type="protein sequence ID" value="CAH07950.1"/>
    <property type="molecule type" value="Genomic_DNA"/>
</dbReference>
<dbReference type="RefSeq" id="WP_005787533.1">
    <property type="nucleotide sequence ID" value="NZ_UFTH01000001.1"/>
</dbReference>
<dbReference type="SMR" id="Q5LD60"/>
<dbReference type="PaxDb" id="272559-BF9343_2169"/>
<dbReference type="KEGG" id="bfs:BF9343_2169"/>
<dbReference type="eggNOG" id="COG2759">
    <property type="taxonomic scope" value="Bacteria"/>
</dbReference>
<dbReference type="HOGENOM" id="CLU_003601_3_3_10"/>
<dbReference type="UniPathway" id="UPA00193"/>
<dbReference type="Proteomes" id="UP000006731">
    <property type="component" value="Chromosome"/>
</dbReference>
<dbReference type="GO" id="GO:0005524">
    <property type="term" value="F:ATP binding"/>
    <property type="evidence" value="ECO:0007669"/>
    <property type="project" value="UniProtKB-UniRule"/>
</dbReference>
<dbReference type="GO" id="GO:0004329">
    <property type="term" value="F:formate-tetrahydrofolate ligase activity"/>
    <property type="evidence" value="ECO:0007669"/>
    <property type="project" value="UniProtKB-UniRule"/>
</dbReference>
<dbReference type="GO" id="GO:0035999">
    <property type="term" value="P:tetrahydrofolate interconversion"/>
    <property type="evidence" value="ECO:0007669"/>
    <property type="project" value="UniProtKB-UniRule"/>
</dbReference>
<dbReference type="CDD" id="cd00477">
    <property type="entry name" value="FTHFS"/>
    <property type="match status" value="1"/>
</dbReference>
<dbReference type="FunFam" id="3.30.1510.10:FF:000001">
    <property type="entry name" value="Formate--tetrahydrofolate ligase"/>
    <property type="match status" value="1"/>
</dbReference>
<dbReference type="Gene3D" id="3.30.1510.10">
    <property type="entry name" value="Domain 2, N(10)-formyltetrahydrofolate synthetase"/>
    <property type="match status" value="1"/>
</dbReference>
<dbReference type="Gene3D" id="3.10.410.10">
    <property type="entry name" value="Formyltetrahydrofolate synthetase, domain 3"/>
    <property type="match status" value="1"/>
</dbReference>
<dbReference type="Gene3D" id="3.40.50.300">
    <property type="entry name" value="P-loop containing nucleotide triphosphate hydrolases"/>
    <property type="match status" value="1"/>
</dbReference>
<dbReference type="HAMAP" id="MF_01543">
    <property type="entry name" value="FTHFS"/>
    <property type="match status" value="1"/>
</dbReference>
<dbReference type="InterPro" id="IPR000559">
    <property type="entry name" value="Formate_THF_ligase"/>
</dbReference>
<dbReference type="InterPro" id="IPR020628">
    <property type="entry name" value="Formate_THF_ligase_CS"/>
</dbReference>
<dbReference type="InterPro" id="IPR027417">
    <property type="entry name" value="P-loop_NTPase"/>
</dbReference>
<dbReference type="NCBIfam" id="NF010030">
    <property type="entry name" value="PRK13505.1"/>
    <property type="match status" value="1"/>
</dbReference>
<dbReference type="Pfam" id="PF01268">
    <property type="entry name" value="FTHFS"/>
    <property type="match status" value="1"/>
</dbReference>
<dbReference type="SUPFAM" id="SSF52540">
    <property type="entry name" value="P-loop containing nucleoside triphosphate hydrolases"/>
    <property type="match status" value="1"/>
</dbReference>
<dbReference type="PROSITE" id="PS00721">
    <property type="entry name" value="FTHFS_1"/>
    <property type="match status" value="1"/>
</dbReference>
<dbReference type="PROSITE" id="PS00722">
    <property type="entry name" value="FTHFS_2"/>
    <property type="match status" value="1"/>
</dbReference>